<evidence type="ECO:0000255" key="1"/>
<evidence type="ECO:0000255" key="2">
    <source>
        <dbReference type="PROSITE-ProRule" id="PRU00387"/>
    </source>
</evidence>
<evidence type="ECO:0000269" key="3">
    <source>
    </source>
</evidence>
<evidence type="ECO:0000269" key="4">
    <source>
    </source>
</evidence>
<evidence type="ECO:0000269" key="5">
    <source>
    </source>
</evidence>
<evidence type="ECO:0000269" key="6">
    <source>
    </source>
</evidence>
<evidence type="ECO:0000269" key="7">
    <source>
    </source>
</evidence>
<evidence type="ECO:0000269" key="8">
    <source>
    </source>
</evidence>
<evidence type="ECO:0000269" key="9">
    <source>
    </source>
</evidence>
<evidence type="ECO:0000305" key="10"/>
<protein>
    <recommendedName>
        <fullName>Fumarate and nitrate reduction regulatory protein</fullName>
    </recommendedName>
</protein>
<reference key="1">
    <citation type="journal article" date="1982" name="Nucleic Acids Res.">
        <title>Nucleotide sequence of the fnr gene and primary structure of the Enr protein of Escherichia coli.</title>
        <authorList>
            <person name="Shaw D.J."/>
            <person name="Guest J.R."/>
        </authorList>
    </citation>
    <scope>NUCLEOTIDE SEQUENCE [GENOMIC DNA]</scope>
</reference>
<reference key="2">
    <citation type="journal article" date="1996" name="DNA Res.">
        <title>A 570-kb DNA sequence of the Escherichia coli K-12 genome corresponding to the 28.0-40.1 min region on the linkage map.</title>
        <authorList>
            <person name="Aiba H."/>
            <person name="Baba T."/>
            <person name="Fujita K."/>
            <person name="Hayashi K."/>
            <person name="Inada T."/>
            <person name="Isono K."/>
            <person name="Itoh T."/>
            <person name="Kasai H."/>
            <person name="Kashimoto K."/>
            <person name="Kimura S."/>
            <person name="Kitakawa M."/>
            <person name="Kitagawa M."/>
            <person name="Makino K."/>
            <person name="Miki T."/>
            <person name="Mizobuchi K."/>
            <person name="Mori H."/>
            <person name="Mori T."/>
            <person name="Motomura K."/>
            <person name="Nakade S."/>
            <person name="Nakamura Y."/>
            <person name="Nashimoto H."/>
            <person name="Nishio Y."/>
            <person name="Oshima T."/>
            <person name="Saito N."/>
            <person name="Sampei G."/>
            <person name="Seki Y."/>
            <person name="Sivasundaram S."/>
            <person name="Tagami H."/>
            <person name="Takeda J."/>
            <person name="Takemoto K."/>
            <person name="Takeuchi Y."/>
            <person name="Wada C."/>
            <person name="Yamamoto Y."/>
            <person name="Horiuchi T."/>
        </authorList>
    </citation>
    <scope>NUCLEOTIDE SEQUENCE [LARGE SCALE GENOMIC DNA]</scope>
    <source>
        <strain>K12 / W3110 / ATCC 27325 / DSM 5911</strain>
    </source>
</reference>
<reference key="3">
    <citation type="journal article" date="1997" name="Science">
        <title>The complete genome sequence of Escherichia coli K-12.</title>
        <authorList>
            <person name="Blattner F.R."/>
            <person name="Plunkett G. III"/>
            <person name="Bloch C.A."/>
            <person name="Perna N.T."/>
            <person name="Burland V."/>
            <person name="Riley M."/>
            <person name="Collado-Vides J."/>
            <person name="Glasner J.D."/>
            <person name="Rode C.K."/>
            <person name="Mayhew G.F."/>
            <person name="Gregor J."/>
            <person name="Davis N.W."/>
            <person name="Kirkpatrick H.A."/>
            <person name="Goeden M.A."/>
            <person name="Rose D.J."/>
            <person name="Mau B."/>
            <person name="Shao Y."/>
        </authorList>
    </citation>
    <scope>NUCLEOTIDE SEQUENCE [LARGE SCALE GENOMIC DNA]</scope>
    <source>
        <strain>K12 / MG1655 / ATCC 47076</strain>
    </source>
</reference>
<reference key="4">
    <citation type="journal article" date="2006" name="Mol. Syst. Biol.">
        <title>Highly accurate genome sequences of Escherichia coli K-12 strains MG1655 and W3110.</title>
        <authorList>
            <person name="Hayashi K."/>
            <person name="Morooka N."/>
            <person name="Yamamoto Y."/>
            <person name="Fujita K."/>
            <person name="Isono K."/>
            <person name="Choi S."/>
            <person name="Ohtsubo E."/>
            <person name="Baba T."/>
            <person name="Wanner B.L."/>
            <person name="Mori H."/>
            <person name="Horiuchi T."/>
        </authorList>
    </citation>
    <scope>NUCLEOTIDE SEQUENCE [LARGE SCALE GENOMIC DNA]</scope>
    <source>
        <strain>K12 / W3110 / ATCC 27325 / DSM 5911</strain>
    </source>
</reference>
<reference key="5">
    <citation type="journal article" date="1990" name="Mol. Microbiol.">
        <title>Isolation of intact FNR protein (Mr 30,000) of Escherichia coli.</title>
        <authorList>
            <person name="Trageser M."/>
            <person name="Spiro S."/>
            <person name="Duchene A."/>
            <person name="Kojro E."/>
            <person name="Fahrenholz F."/>
            <person name="Guest J.R."/>
            <person name="Unden G."/>
        </authorList>
    </citation>
    <scope>PROTEIN SEQUENCE OF 1-19</scope>
    <scope>SEQUENCE REVISION TO 29</scope>
</reference>
<reference key="6">
    <citation type="journal article" date="1993" name="Genes Dev.">
        <title>The activity of the Escherichia coli transcription factor FNR is regulated by a change in oligomeric state.</title>
        <authorList>
            <person name="Lazazzera B.A."/>
            <person name="Bates D.M."/>
            <person name="Kiley P.J."/>
        </authorList>
    </citation>
    <scope>CHARACTERIZATION</scope>
    <scope>MUTAGENESIS OF ASP-154</scope>
    <source>
        <strain>K12 / MG1655 / ATCC 47076</strain>
    </source>
</reference>
<reference key="7">
    <citation type="journal article" date="1997" name="Proc. Natl. Acad. Sci. U.S.A.">
        <title>Iron-sulfur cluster disassembly in the FNR protein of Escherichia coli by O2: [4Fe-4S] to [2Fe-2S] conversion with loss of biological activity.</title>
        <authorList>
            <person name="Khoroshilova N."/>
            <person name="Popescu C."/>
            <person name="Muenck E."/>
            <person name="Beinert H."/>
            <person name="Kiley P.J."/>
        </authorList>
    </citation>
    <scope>CHARACTERIZATION</scope>
    <source>
        <strain>B</strain>
    </source>
</reference>
<reference key="8">
    <citation type="journal article" date="2001" name="Mol. Microbiol.">
        <title>Anaerobic acquisition of [4FE 4S] clusters by the inactive FNR(C20S) variant and restoration of activity by second-site amino acid substitutions.</title>
        <authorList>
            <person name="Ralph E.T."/>
            <person name="Scott C."/>
            <person name="Jordan P.A."/>
            <person name="Thomson A.J."/>
            <person name="Guest J.R."/>
            <person name="Green J."/>
        </authorList>
    </citation>
    <scope>CHARACTERIZATION</scope>
    <scope>MUTAGENESIS</scope>
</reference>
<reference key="9">
    <citation type="journal article" date="1993" name="Mol. Microbiol.">
        <title>Properties of FNR proteins substituted at each of the five cysteine residues.</title>
        <authorList>
            <person name="Green J."/>
            <person name="Sharrocks A.D."/>
            <person name="Green B."/>
            <person name="Geisow M."/>
            <person name="Guest J.R."/>
        </authorList>
    </citation>
    <scope>MASS SPECTROMETRY</scope>
    <scope>CHARACTERIZATION OF MUTANTS</scope>
</reference>
<reference key="10">
    <citation type="journal article" date="1990" name="FEBS Lett.">
        <title>In vivo and in vitro mutants of FNR the anaerobic transcriptional regulator of E. coli.</title>
        <authorList>
            <person name="Sharrocks A.D."/>
            <person name="Green J."/>
            <person name="Guest J.R."/>
        </authorList>
    </citation>
    <scope>MUTAGENESIS OF CYS-16; CYS-20; CYS-23; CYS-29; GLU-64; GLY-96 AND CYS-122</scope>
    <source>
        <strain>K12 / W3110 / ATCC 27325 / DSM 5911</strain>
    </source>
</reference>
<reference key="11">
    <citation type="journal article" date="1991" name="J. Bacteriol.">
        <title>Fnr mutants that activate gene expression in the presence of oxygen.</title>
        <authorList>
            <person name="Kiley P.J."/>
            <person name="Reznikoff W.S."/>
        </authorList>
    </citation>
    <scope>MUTAGENESIS OF ASP-22; LEU-28; HIS-93; GLU-150 AND ASP-154</scope>
    <source>
        <strain>K12 / MG1655 / ATCC 47076</strain>
    </source>
</reference>
<reference key="12">
    <citation type="journal article" date="1991" name="Nucleic Acids Res.">
        <title>The role of two surface exposed loops in transcription activation by the Escherichia coli CRP and FNR proteins.</title>
        <authorList>
            <person name="Williams R."/>
            <person name="Bell A."/>
            <person name="Sims G."/>
            <person name="Busby S.J.W."/>
        </authorList>
    </citation>
    <scope>MUTAGENESIS OF ILE-81; THR-82; GLY-85; ASP-86; GLU-87 AND GLN-88</scope>
</reference>
<reference key="13">
    <citation type="journal article" date="1997" name="Nucleic Acids Res.">
        <title>Transcription activation at class I FNR-dependent promoters: identification of the activating surface of FNR and the corresponding contact site in the C-terminal domain of the RNA polymerase alpha subunit.</title>
        <authorList>
            <person name="Williams S.M."/>
            <person name="Savery N.J."/>
            <person name="Busby S.J.W."/>
            <person name="Wing H.J."/>
        </authorList>
    </citation>
    <scope>MUTAGENESIS OF ASP-43; ARG-72; SER-73; GLY-74; THR-118; MET-120; PHE-181; PHE-186; SER-187 AND PHE-191</scope>
</reference>
<reference key="14">
    <citation type="journal article" date="2000" name="Mol. Microbiol.">
        <title>FNR-dependent activation of the class II dmsA and narG promoters of Escherichia coli requires FNR-activating regions 1 and 3.</title>
        <authorList>
            <person name="Lamberg K.E."/>
            <person name="Kiley P.J."/>
        </authorList>
    </citation>
    <scope>MUTAGENESIS OF SER-73; GLY-85; THR-118 AND SER-187</scope>
    <source>
        <strain>K12 / MG1655 / ATCC 47076</strain>
    </source>
</reference>
<reference key="15">
    <citation type="journal article" date="2001" name="J. Biol. Chem.">
        <title>Characterization of the dimerization domain in the FNR transcription factor.</title>
        <authorList>
            <person name="Moore L.J."/>
            <person name="Kiley P.J."/>
        </authorList>
    </citation>
    <scope>MUTAGENESIS OF ALL RESIDUES IN THE DIMERIZATION HELIX</scope>
    <source>
        <strain>K12 / MG1655 / ATCC 47076</strain>
    </source>
</reference>
<reference key="16">
    <citation type="journal article" date="1990" name="FEMS Microbiol. Rev.">
        <title>FNR and its role in oxygen-regulated gene expression in Escherichia coli.</title>
        <authorList>
            <person name="Spiro S."/>
            <person name="Guest J.R."/>
        </authorList>
    </citation>
    <scope>REVIEW</scope>
</reference>
<reference key="17">
    <citation type="journal article" date="1998" name="FEMS Microbiol. Rev.">
        <title>Oxygen sensing by the global regulator, FNR: the role of the iron-sulfur cluster.</title>
        <authorList>
            <person name="Kiley P.J."/>
            <person name="Beinert H."/>
        </authorList>
    </citation>
    <scope>REVIEW</scope>
</reference>
<reference key="18">
    <citation type="journal article" date="2001" name="Adv. Microb. Physiol.">
        <title>Functional versatility in the CRP-FNR superfamily of transcription factors: FNR and FLP.</title>
        <authorList>
            <person name="Green J."/>
            <person name="Scott C."/>
            <person name="Guest J.R."/>
        </authorList>
    </citation>
    <scope>REVIEW</scope>
</reference>
<keyword id="KW-0004">4Fe-4S</keyword>
<keyword id="KW-0010">Activator</keyword>
<keyword id="KW-0963">Cytoplasm</keyword>
<keyword id="KW-0903">Direct protein sequencing</keyword>
<keyword id="KW-0238">DNA-binding</keyword>
<keyword id="KW-0408">Iron</keyword>
<keyword id="KW-0411">Iron-sulfur</keyword>
<keyword id="KW-0479">Metal-binding</keyword>
<keyword id="KW-1185">Reference proteome</keyword>
<keyword id="KW-0678">Repressor</keyword>
<keyword id="KW-0804">Transcription</keyword>
<keyword id="KW-0805">Transcription regulation</keyword>
<sequence length="250" mass="27967">MIPEKRIIRRIQSGGCAIHCQDCSISQLCIPFTLNEHELDQLDNIIERKKPIQKGQTLFKAGDELKSLYAIRSGTIKSYTITEQGDEQITGFHLAGDLVGFDAIGSGHHPSFAQALETSMVCEIPFETLDDLSGKMPNLRQQMMRLMSGEIKGDQDMILLLSKKNAEERLAAFIYNLSRRFAQRGFSPREFRLTMTRGDIGNYLGLTVETISRLLGRFQKSGMLAVKGKYITIENNDALAQLAGHTRNVA</sequence>
<feature type="chain" id="PRO_0000100161" description="Fumarate and nitrate reduction regulatory protein">
    <location>
        <begin position="1"/>
        <end position="250"/>
    </location>
</feature>
<feature type="domain" description="HTH crp-type" evidence="2">
    <location>
        <begin position="164"/>
        <end position="237"/>
    </location>
</feature>
<feature type="DNA-binding region" description="H-T-H motif" evidence="2">
    <location>
        <begin position="197"/>
        <end position="216"/>
    </location>
</feature>
<feature type="region of interest" description="Essential for the oxygen-regulated activity">
    <location>
        <begin position="20"/>
        <end position="29"/>
    </location>
</feature>
<feature type="region of interest" description="Activating region 2A" evidence="1">
    <location>
        <begin position="47"/>
        <end position="50"/>
    </location>
</feature>
<feature type="region of interest" description="Activating region 3A" evidence="1">
    <location>
        <begin position="60"/>
        <end position="61"/>
    </location>
</feature>
<feature type="region of interest" description="Activating region 1A" evidence="1">
    <location>
        <begin position="71"/>
        <end position="75"/>
    </location>
</feature>
<feature type="region of interest" description="Activating region 3B" evidence="1">
    <location>
        <position position="81"/>
    </location>
</feature>
<feature type="region of interest" description="Activating region 3C" evidence="1">
    <location>
        <begin position="85"/>
        <end position="87"/>
    </location>
</feature>
<feature type="region of interest" description="Activating region 3D" evidence="1">
    <location>
        <position position="112"/>
    </location>
</feature>
<feature type="region of interest" description="Activating region 1B" evidence="1">
    <location>
        <begin position="116"/>
        <end position="121"/>
    </location>
</feature>
<feature type="region of interest" description="Activating region 2B" evidence="1">
    <location>
        <begin position="123"/>
        <end position="124"/>
    </location>
</feature>
<feature type="region of interest" description="Activating region 2C" evidence="1">
    <location>
        <begin position="127"/>
        <end position="128"/>
    </location>
</feature>
<feature type="region of interest" description="Dimerization" evidence="1">
    <location>
        <begin position="140"/>
        <end position="159"/>
    </location>
</feature>
<feature type="region of interest" description="Activating region 1C" evidence="1">
    <location>
        <begin position="181"/>
        <end position="191"/>
    </location>
</feature>
<feature type="binding site" evidence="1">
    <location>
        <position position="20"/>
    </location>
    <ligand>
        <name>[4Fe-4S] cluster</name>
        <dbReference type="ChEBI" id="CHEBI:49883"/>
    </ligand>
</feature>
<feature type="binding site" evidence="1">
    <location>
        <position position="23"/>
    </location>
    <ligand>
        <name>[4Fe-4S] cluster</name>
        <dbReference type="ChEBI" id="CHEBI:49883"/>
    </ligand>
</feature>
<feature type="binding site" evidence="1">
    <location>
        <position position="29"/>
    </location>
    <ligand>
        <name>[4Fe-4S] cluster</name>
        <dbReference type="ChEBI" id="CHEBI:49883"/>
    </ligand>
</feature>
<feature type="binding site" evidence="1">
    <location>
        <position position="122"/>
    </location>
    <ligand>
        <name>[4Fe-4S] cluster</name>
        <dbReference type="ChEBI" id="CHEBI:49883"/>
    </ligand>
</feature>
<feature type="mutagenesis site" description="No effect." evidence="6">
    <original>C</original>
    <variation>A</variation>
    <location>
        <position position="16"/>
    </location>
</feature>
<feature type="mutagenesis site" description="Loss of activity." evidence="6">
    <original>C</original>
    <variation>S</variation>
    <location>
        <position position="20"/>
    </location>
</feature>
<feature type="mutagenesis site" description="Loss of regulation by O(2)." evidence="5">
    <original>D</original>
    <variation>G</variation>
    <location>
        <position position="22"/>
    </location>
</feature>
<feature type="mutagenesis site" description="Loss of activity." evidence="6">
    <original>C</original>
    <variation>G</variation>
    <location>
        <position position="23"/>
    </location>
</feature>
<feature type="mutagenesis site" description="Loss of regulation by O(2)." evidence="5">
    <original>L</original>
    <variation>H</variation>
    <location>
        <position position="28"/>
    </location>
</feature>
<feature type="mutagenesis site" description="Loss of activity." evidence="6">
    <original>C</original>
    <variation>G</variation>
    <location>
        <position position="29"/>
    </location>
</feature>
<feature type="mutagenesis site" description="Decrease in activity; no effect on DNA-binding." evidence="9">
    <original>D</original>
    <variation>G</variation>
    <location>
        <position position="43"/>
    </location>
</feature>
<feature type="mutagenesis site" description="No effect." evidence="6">
    <original>E</original>
    <variation>Q</variation>
    <location>
        <position position="64"/>
    </location>
</feature>
<feature type="mutagenesis site" description="Decrease in activity; no effect on DNA-binding." evidence="9">
    <original>R</original>
    <variation>H</variation>
    <location>
        <position position="72"/>
    </location>
</feature>
<feature type="mutagenesis site" description="Decrease in activity; no effect on DNA-binding." evidence="3 9">
    <original>S</original>
    <variation>F</variation>
    <location>
        <position position="73"/>
    </location>
</feature>
<feature type="mutagenesis site" description="Decrease in activity; no effect on DNA-binding." evidence="4">
    <original>I</original>
    <variation>T</variation>
    <location>
        <position position="81"/>
    </location>
</feature>
<feature type="mutagenesis site" description="Decrease in activity; no effect on DNA-binding." evidence="4">
    <original>T</original>
    <variation>P</variation>
    <location>
        <position position="82"/>
    </location>
</feature>
<feature type="mutagenesis site" description="Decrease in activity; no effect on DNA-binding. Trace activity; when associated with P-187." evidence="3 4">
    <original>G</original>
    <variation>A</variation>
    <location>
        <position position="85"/>
    </location>
</feature>
<feature type="mutagenesis site" description="Decrease in activity; no effect on DNA-binding." evidence="4">
    <original>D</original>
    <variation>A</variation>
    <location>
        <position position="86"/>
    </location>
</feature>
<feature type="mutagenesis site" description="Decrease in activity; no effect on DNA-binding." evidence="4">
    <original>E</original>
    <variation>K</variation>
    <location>
        <position position="87"/>
    </location>
</feature>
<feature type="mutagenesis site" description="Decrease in activity; no effect on DNA-binding." evidence="4">
    <original>Q</original>
    <variation>E</variation>
    <location>
        <position position="88"/>
    </location>
</feature>
<feature type="mutagenesis site" description="Loss of regulation by O(2)." evidence="5">
    <original>H</original>
    <variation>R</variation>
    <location>
        <position position="93"/>
    </location>
</feature>
<feature type="mutagenesis site" description="Loss of activity." evidence="6">
    <original>G</original>
    <variation>D</variation>
    <location>
        <position position="96"/>
    </location>
</feature>
<feature type="mutagenesis site" description="Decrease in activity; no effect on DNA-binding." evidence="3 9">
    <original>T</original>
    <variation>A</variation>
    <variation>P</variation>
    <location>
        <position position="118"/>
    </location>
</feature>
<feature type="mutagenesis site" description="Decrease in activity; no effect on DNA-binding." evidence="9">
    <original>M</original>
    <variation>I</variation>
    <variation>R</variation>
    <variation>T</variation>
    <variation>V</variation>
    <location>
        <position position="120"/>
    </location>
</feature>
<feature type="mutagenesis site" description="Loss of activity." evidence="6">
    <original>C</original>
    <variation>A</variation>
    <variation>S</variation>
    <location>
        <position position="122"/>
    </location>
</feature>
<feature type="mutagenesis site" description="Decrease in activity.">
    <original>R</original>
    <variation>A</variation>
    <location>
        <position position="140"/>
    </location>
</feature>
<feature type="mutagenesis site" description="Decrease in activity.">
    <original>M</original>
    <variation>A</variation>
    <location>
        <position position="143"/>
    </location>
</feature>
<feature type="mutagenesis site" description="Decrease in activity due to faulty dimerization.">
    <original>M</original>
    <variation>A</variation>
    <location>
        <position position="144"/>
    </location>
</feature>
<feature type="mutagenesis site" description="Decrease in activity.">
    <original>R</original>
    <variation>A</variation>
    <location>
        <position position="145"/>
    </location>
</feature>
<feature type="mutagenesis site" description="Decrease in activity.">
    <original>L</original>
    <variation>A</variation>
    <location>
        <position position="146"/>
    </location>
</feature>
<feature type="mutagenesis site" description="Decrease in activity due to faulty dimerization.">
    <original>M</original>
    <variation>A</variation>
    <location>
        <position position="147"/>
    </location>
</feature>
<feature type="mutagenesis site" description="Loss of regulation by O(2)." evidence="5">
    <original>E</original>
    <variation>K</variation>
    <location>
        <position position="150"/>
    </location>
</feature>
<feature type="mutagenesis site" description="Decrease in activity due to faulty dimerization.">
    <original>I</original>
    <variation>A</variation>
    <location>
        <position position="151"/>
    </location>
</feature>
<feature type="mutagenesis site" description="Loss of regulation by O(2)." evidence="5 7">
    <original>D</original>
    <variation>A</variation>
    <variation>G</variation>
    <variation>V</variation>
    <location>
        <position position="154"/>
    </location>
</feature>
<feature type="mutagenesis site" description="Decrease in activity due to faulty dimerization.">
    <original>I</original>
    <variation>A</variation>
    <location>
        <position position="158"/>
    </location>
</feature>
<feature type="mutagenesis site" description="Decrease in activity; no effect on DNA-binding." evidence="9">
    <original>F</original>
    <variation>L</variation>
    <location>
        <position position="181"/>
    </location>
</feature>
<feature type="mutagenesis site" description="Decrease in activity; no effect on DNA-binding." evidence="9">
    <original>F</original>
    <variation>S</variation>
    <location>
        <position position="186"/>
    </location>
</feature>
<feature type="mutagenesis site" description="Decrease in activity; no effect on DNA-binding. Trace activity; when associated with A-85." evidence="3 9">
    <original>S</original>
    <variation>P</variation>
    <location>
        <position position="187"/>
    </location>
</feature>
<feature type="mutagenesis site" description="Decrease in activity; no effect on DNA-binding." evidence="9">
    <original>F</original>
    <variation>L</variation>
    <location>
        <position position="191"/>
    </location>
</feature>
<name>FNR_ECOLI</name>
<gene>
    <name type="primary">fnr</name>
    <name type="synonym">nirR</name>
    <name type="ordered locus">b1334</name>
    <name type="ordered locus">JW1328</name>
</gene>
<proteinExistence type="evidence at protein level"/>
<accession>P0A9E5</accession>
<accession>P03019</accession>
<dbReference type="EMBL" id="J01608">
    <property type="protein sequence ID" value="AAA87981.1"/>
    <property type="status" value="ALT_SEQ"/>
    <property type="molecule type" value="Genomic_DNA"/>
</dbReference>
<dbReference type="EMBL" id="U00096">
    <property type="protein sequence ID" value="AAC74416.1"/>
    <property type="molecule type" value="Genomic_DNA"/>
</dbReference>
<dbReference type="EMBL" id="AP009048">
    <property type="protein sequence ID" value="BAA14927.1"/>
    <property type="molecule type" value="Genomic_DNA"/>
</dbReference>
<dbReference type="PIR" id="A64883">
    <property type="entry name" value="RGECF"/>
</dbReference>
<dbReference type="RefSeq" id="NP_415850.1">
    <property type="nucleotide sequence ID" value="NC_000913.3"/>
</dbReference>
<dbReference type="RefSeq" id="WP_000611911.1">
    <property type="nucleotide sequence ID" value="NZ_STEB01000005.1"/>
</dbReference>
<dbReference type="SMR" id="P0A9E5"/>
<dbReference type="BioGRID" id="4261852">
    <property type="interactions" value="117"/>
</dbReference>
<dbReference type="BioGRID" id="850273">
    <property type="interactions" value="2"/>
</dbReference>
<dbReference type="DIP" id="DIP-9669N"/>
<dbReference type="FunCoup" id="P0A9E5">
    <property type="interactions" value="470"/>
</dbReference>
<dbReference type="IntAct" id="P0A9E5">
    <property type="interactions" value="8"/>
</dbReference>
<dbReference type="STRING" id="511145.b1334"/>
<dbReference type="jPOST" id="P0A9E5"/>
<dbReference type="PaxDb" id="511145-b1334"/>
<dbReference type="EnsemblBacteria" id="AAC74416">
    <property type="protein sequence ID" value="AAC74416"/>
    <property type="gene ID" value="b1334"/>
</dbReference>
<dbReference type="GeneID" id="93775469"/>
<dbReference type="GeneID" id="945908"/>
<dbReference type="KEGG" id="ecj:JW1328"/>
<dbReference type="KEGG" id="eco:b1334"/>
<dbReference type="KEGG" id="ecoc:C3026_07810"/>
<dbReference type="PATRIC" id="fig|1411691.4.peg.943"/>
<dbReference type="EchoBASE" id="EB0321"/>
<dbReference type="eggNOG" id="COG0664">
    <property type="taxonomic scope" value="Bacteria"/>
</dbReference>
<dbReference type="HOGENOM" id="CLU_075053_0_2_6"/>
<dbReference type="InParanoid" id="P0A9E5"/>
<dbReference type="OMA" id="SICRIHK"/>
<dbReference type="OrthoDB" id="7643467at2"/>
<dbReference type="PhylomeDB" id="P0A9E5"/>
<dbReference type="BioCyc" id="EcoCyc:PD00197"/>
<dbReference type="PHI-base" id="PHI:4876"/>
<dbReference type="PHI-base" id="PHI:7248"/>
<dbReference type="PRO" id="PR:P0A9E5"/>
<dbReference type="Proteomes" id="UP000000625">
    <property type="component" value="Chromosome"/>
</dbReference>
<dbReference type="CollecTF" id="EXPREG_000007e0"/>
<dbReference type="GO" id="GO:0005829">
    <property type="term" value="C:cytosol"/>
    <property type="evidence" value="ECO:0000314"/>
    <property type="project" value="EcoCyc"/>
</dbReference>
<dbReference type="GO" id="GO:0032993">
    <property type="term" value="C:protein-DNA complex"/>
    <property type="evidence" value="ECO:0000315"/>
    <property type="project" value="CollecTF"/>
</dbReference>
<dbReference type="GO" id="GO:0051539">
    <property type="term" value="F:4 iron, 4 sulfur cluster binding"/>
    <property type="evidence" value="ECO:0000314"/>
    <property type="project" value="EcoCyc"/>
</dbReference>
<dbReference type="GO" id="GO:0003677">
    <property type="term" value="F:DNA binding"/>
    <property type="evidence" value="ECO:0000314"/>
    <property type="project" value="EcoCyc"/>
</dbReference>
<dbReference type="GO" id="GO:0001216">
    <property type="term" value="F:DNA-binding transcription activator activity"/>
    <property type="evidence" value="ECO:0000315"/>
    <property type="project" value="CollecTF"/>
</dbReference>
<dbReference type="GO" id="GO:0003700">
    <property type="term" value="F:DNA-binding transcription factor activity"/>
    <property type="evidence" value="ECO:0000314"/>
    <property type="project" value="EcoCyc"/>
</dbReference>
<dbReference type="GO" id="GO:0051536">
    <property type="term" value="F:iron-sulfur cluster binding"/>
    <property type="evidence" value="ECO:0000314"/>
    <property type="project" value="EcoCyc"/>
</dbReference>
<dbReference type="GO" id="GO:0046872">
    <property type="term" value="F:metal ion binding"/>
    <property type="evidence" value="ECO:0007669"/>
    <property type="project" value="UniProtKB-KW"/>
</dbReference>
<dbReference type="GO" id="GO:0000976">
    <property type="term" value="F:transcription cis-regulatory region binding"/>
    <property type="evidence" value="ECO:0000315"/>
    <property type="project" value="CollecTF"/>
</dbReference>
<dbReference type="GO" id="GO:0009061">
    <property type="term" value="P:anaerobic respiration"/>
    <property type="evidence" value="ECO:0000270"/>
    <property type="project" value="EcoCyc"/>
</dbReference>
<dbReference type="GO" id="GO:0045893">
    <property type="term" value="P:positive regulation of DNA-templated transcription"/>
    <property type="evidence" value="ECO:0000314"/>
    <property type="project" value="CollecTF"/>
</dbReference>
<dbReference type="GO" id="GO:0006355">
    <property type="term" value="P:regulation of DNA-templated transcription"/>
    <property type="evidence" value="ECO:0000270"/>
    <property type="project" value="EcoCyc"/>
</dbReference>
<dbReference type="GO" id="GO:0071731">
    <property type="term" value="P:response to nitric oxide"/>
    <property type="evidence" value="ECO:0000270"/>
    <property type="project" value="EcoCyc"/>
</dbReference>
<dbReference type="CDD" id="cd00038">
    <property type="entry name" value="CAP_ED"/>
    <property type="match status" value="1"/>
</dbReference>
<dbReference type="CDD" id="cd00092">
    <property type="entry name" value="HTH_CRP"/>
    <property type="match status" value="1"/>
</dbReference>
<dbReference type="FunFam" id="1.10.10.10:FF:000028">
    <property type="entry name" value="Fumarate/nitrate reduction transcriptional regulator Fnr"/>
    <property type="match status" value="1"/>
</dbReference>
<dbReference type="FunFam" id="2.60.120.10:FF:000004">
    <property type="entry name" value="Fumarate/nitrate reduction transcriptional regulator Fnr"/>
    <property type="match status" value="1"/>
</dbReference>
<dbReference type="Gene3D" id="2.60.120.10">
    <property type="entry name" value="Jelly Rolls"/>
    <property type="match status" value="1"/>
</dbReference>
<dbReference type="Gene3D" id="1.10.10.10">
    <property type="entry name" value="Winged helix-like DNA-binding domain superfamily/Winged helix DNA-binding domain"/>
    <property type="match status" value="1"/>
</dbReference>
<dbReference type="InterPro" id="IPR000595">
    <property type="entry name" value="cNMP-bd_dom"/>
</dbReference>
<dbReference type="InterPro" id="IPR018490">
    <property type="entry name" value="cNMP-bd_dom_sf"/>
</dbReference>
<dbReference type="InterPro" id="IPR050397">
    <property type="entry name" value="Env_Response_Regulators"/>
</dbReference>
<dbReference type="InterPro" id="IPR012318">
    <property type="entry name" value="HTH_CRP"/>
</dbReference>
<dbReference type="InterPro" id="IPR014710">
    <property type="entry name" value="RmlC-like_jellyroll"/>
</dbReference>
<dbReference type="InterPro" id="IPR018335">
    <property type="entry name" value="Tscrpt_reg_HTH_Crp-type_CS"/>
</dbReference>
<dbReference type="InterPro" id="IPR036388">
    <property type="entry name" value="WH-like_DNA-bd_sf"/>
</dbReference>
<dbReference type="InterPro" id="IPR036390">
    <property type="entry name" value="WH_DNA-bd_sf"/>
</dbReference>
<dbReference type="NCBIfam" id="NF008365">
    <property type="entry name" value="PRK11161.1"/>
    <property type="match status" value="1"/>
</dbReference>
<dbReference type="PANTHER" id="PTHR24567">
    <property type="entry name" value="CRP FAMILY TRANSCRIPTIONAL REGULATORY PROTEIN"/>
    <property type="match status" value="1"/>
</dbReference>
<dbReference type="PANTHER" id="PTHR24567:SF75">
    <property type="entry name" value="FUMARATE AND NITRATE REDUCTION REGULATORY PROTEIN"/>
    <property type="match status" value="1"/>
</dbReference>
<dbReference type="Pfam" id="PF00027">
    <property type="entry name" value="cNMP_binding"/>
    <property type="match status" value="1"/>
</dbReference>
<dbReference type="Pfam" id="PF13545">
    <property type="entry name" value="HTH_Crp_2"/>
    <property type="match status" value="1"/>
</dbReference>
<dbReference type="PRINTS" id="PR00034">
    <property type="entry name" value="HTHCRP"/>
</dbReference>
<dbReference type="SMART" id="SM00100">
    <property type="entry name" value="cNMP"/>
    <property type="match status" value="1"/>
</dbReference>
<dbReference type="SMART" id="SM00419">
    <property type="entry name" value="HTH_CRP"/>
    <property type="match status" value="1"/>
</dbReference>
<dbReference type="SUPFAM" id="SSF51206">
    <property type="entry name" value="cAMP-binding domain-like"/>
    <property type="match status" value="1"/>
</dbReference>
<dbReference type="SUPFAM" id="SSF46785">
    <property type="entry name" value="Winged helix' DNA-binding domain"/>
    <property type="match status" value="1"/>
</dbReference>
<dbReference type="PROSITE" id="PS50042">
    <property type="entry name" value="CNMP_BINDING_3"/>
    <property type="match status" value="1"/>
</dbReference>
<dbReference type="PROSITE" id="PS00042">
    <property type="entry name" value="HTH_CRP_1"/>
    <property type="match status" value="1"/>
</dbReference>
<dbReference type="PROSITE" id="PS51063">
    <property type="entry name" value="HTH_CRP_2"/>
    <property type="match status" value="1"/>
</dbReference>
<comment type="function">
    <text>Global transcription factor that controls the expression of over 100 target genes in response to anoxia. It facilitates the adaptation to anaerobic growth conditions by regulating the expression of gene products that are involved in anaerobic energy metabolism. When the terminal electron acceptor, O(2), is no longer available, it represses the synthesis of enzymes involved in aerobic respiration and increases the synthesis of enzymes required for anaerobic respiration.</text>
</comment>
<comment type="cofactor">
    <cofactor>
        <name>[4Fe-4S] cluster</name>
        <dbReference type="ChEBI" id="CHEBI:49883"/>
    </cofactor>
    <text>Binds 1 [4Fe-4S] cluster per subunit.</text>
</comment>
<comment type="subunit">
    <text>Homodimer.</text>
</comment>
<comment type="subcellular location">
    <subcellularLocation>
        <location evidence="10">Cytoplasm</location>
    </subcellularLocation>
</comment>
<comment type="domain">
    <text>The amino acid residues contacting the FNR target site on the DNA (5'-TTGATNNNNATCAA-3') are located in the putative DNA-recognition helix (alphaF), which contains the FNR motif (EXXSR). Three surface-exposed loops forming activating region 1 (AR1) in the downstream subunit of the dimer contact the C-terminal domain of the alpha subunit (alphaCTD) of RNA polymerase for activation of class I promoters (the 161-121 loop is the major AR1 activating determinant). At class II promoters, the AR1 of the upstream subunit contacts alphaCTD, promoting open complex formation; activating region 3 (AR3) of the downstream subunit contacts region 4 of the sigma70 subunit of RNA polymerase, to effect direct activation. At promoters repressed by FNR, tandem FNR dimers might interact with each other at AR1 to restrict access to a promoter or jam the promoter by their dual interaction with RNA polymerase alphaCTD.</text>
</comment>
<comment type="mass spectrometry" mass="26823.0" error="6.0" method="Electrospray" evidence="8"/>
<comment type="miscellaneous">
    <text>FNR senses the oxygen concentration directly via the disassembly and reassembly of the [4Fe-4S] clusters. Anaerobic, de novo acquisition of the iron-sulfur cluster converts monomeric, inactive apo-FNR into a dimeric form containing two [4Fe-4S] clusters. This, in turn, enhances the affinity of FNR for specific DNA targets and mediates transcription regulation by establishing direct FNR-RNA polymerase contacts. With the increase in intracellular oxygen concentration, the [4Fe-4S] cluster is oxidized, producing a [2Fe-2S] cluster, which decays to apo-FNR. Apo-FNR [4SH] can be reversibly oxidized to a disulfide form [2SH,S-S], suggesting that FNR may be able to sense oxidative stress as well as normoxia. This interconversion may be mediated by agents such as glutathione or thioredoxin.</text>
</comment>
<organism>
    <name type="scientific">Escherichia coli (strain K12)</name>
    <dbReference type="NCBI Taxonomy" id="83333"/>
    <lineage>
        <taxon>Bacteria</taxon>
        <taxon>Pseudomonadati</taxon>
        <taxon>Pseudomonadota</taxon>
        <taxon>Gammaproteobacteria</taxon>
        <taxon>Enterobacterales</taxon>
        <taxon>Enterobacteriaceae</taxon>
        <taxon>Escherichia</taxon>
    </lineage>
</organism>